<sequence length="201" mass="22087">MELVLKDAQSALTVSETTFGRDFNEALVHQVVVAYAAGARQGTRAQKTRAEVTGSGKKPWRQKGTGRARSGSIKSPIWRSGGVTFAARPQDHSQKVNKKMYRGALKSILSELVRQDRLIVVEKFSVEAPKTKLLAQKLKDMALEDVLIITGELDENLFLAARNLHKVDVRDATGIDPVSLIAFDKVVMTADAVKQVEEMLA</sequence>
<dbReference type="EMBL" id="CP000247">
    <property type="protein sequence ID" value="ABG71387.1"/>
    <property type="molecule type" value="Genomic_DNA"/>
</dbReference>
<dbReference type="RefSeq" id="WP_000424395.1">
    <property type="nucleotide sequence ID" value="NC_008253.1"/>
</dbReference>
<dbReference type="SMR" id="Q0TCE2"/>
<dbReference type="GeneID" id="97442859"/>
<dbReference type="KEGG" id="ecp:ECP_3407"/>
<dbReference type="HOGENOM" id="CLU_041575_5_2_6"/>
<dbReference type="Proteomes" id="UP000009182">
    <property type="component" value="Chromosome"/>
</dbReference>
<dbReference type="GO" id="GO:1990904">
    <property type="term" value="C:ribonucleoprotein complex"/>
    <property type="evidence" value="ECO:0007669"/>
    <property type="project" value="UniProtKB-KW"/>
</dbReference>
<dbReference type="GO" id="GO:0005840">
    <property type="term" value="C:ribosome"/>
    <property type="evidence" value="ECO:0007669"/>
    <property type="project" value="UniProtKB-KW"/>
</dbReference>
<dbReference type="GO" id="GO:0019843">
    <property type="term" value="F:rRNA binding"/>
    <property type="evidence" value="ECO:0007669"/>
    <property type="project" value="UniProtKB-UniRule"/>
</dbReference>
<dbReference type="GO" id="GO:0003735">
    <property type="term" value="F:structural constituent of ribosome"/>
    <property type="evidence" value="ECO:0007669"/>
    <property type="project" value="InterPro"/>
</dbReference>
<dbReference type="GO" id="GO:0006412">
    <property type="term" value="P:translation"/>
    <property type="evidence" value="ECO:0007669"/>
    <property type="project" value="UniProtKB-UniRule"/>
</dbReference>
<dbReference type="FunFam" id="3.40.1370.10:FF:000001">
    <property type="entry name" value="50S ribosomal protein L4"/>
    <property type="match status" value="1"/>
</dbReference>
<dbReference type="Gene3D" id="3.40.1370.10">
    <property type="match status" value="1"/>
</dbReference>
<dbReference type="HAMAP" id="MF_01328_B">
    <property type="entry name" value="Ribosomal_uL4_B"/>
    <property type="match status" value="1"/>
</dbReference>
<dbReference type="InterPro" id="IPR002136">
    <property type="entry name" value="Ribosomal_uL4"/>
</dbReference>
<dbReference type="InterPro" id="IPR013005">
    <property type="entry name" value="Ribosomal_uL4-like"/>
</dbReference>
<dbReference type="InterPro" id="IPR023574">
    <property type="entry name" value="Ribosomal_uL4_dom_sf"/>
</dbReference>
<dbReference type="NCBIfam" id="TIGR03953">
    <property type="entry name" value="rplD_bact"/>
    <property type="match status" value="1"/>
</dbReference>
<dbReference type="PANTHER" id="PTHR10746">
    <property type="entry name" value="50S RIBOSOMAL PROTEIN L4"/>
    <property type="match status" value="1"/>
</dbReference>
<dbReference type="PANTHER" id="PTHR10746:SF6">
    <property type="entry name" value="LARGE RIBOSOMAL SUBUNIT PROTEIN UL4M"/>
    <property type="match status" value="1"/>
</dbReference>
<dbReference type="Pfam" id="PF00573">
    <property type="entry name" value="Ribosomal_L4"/>
    <property type="match status" value="1"/>
</dbReference>
<dbReference type="SUPFAM" id="SSF52166">
    <property type="entry name" value="Ribosomal protein L4"/>
    <property type="match status" value="1"/>
</dbReference>
<feature type="chain" id="PRO_1000052396" description="Large ribosomal subunit protein uL4">
    <location>
        <begin position="1"/>
        <end position="201"/>
    </location>
</feature>
<feature type="region of interest" description="Disordered" evidence="2">
    <location>
        <begin position="44"/>
        <end position="71"/>
    </location>
</feature>
<name>RL4_ECOL5</name>
<protein>
    <recommendedName>
        <fullName evidence="1">Large ribosomal subunit protein uL4</fullName>
    </recommendedName>
    <alternativeName>
        <fullName evidence="3">50S ribosomal protein L4</fullName>
    </alternativeName>
</protein>
<evidence type="ECO:0000255" key="1">
    <source>
        <dbReference type="HAMAP-Rule" id="MF_01328"/>
    </source>
</evidence>
<evidence type="ECO:0000256" key="2">
    <source>
        <dbReference type="SAM" id="MobiDB-lite"/>
    </source>
</evidence>
<evidence type="ECO:0000305" key="3"/>
<reference key="1">
    <citation type="journal article" date="2006" name="Mol. Microbiol.">
        <title>Role of pathogenicity island-associated integrases in the genome plasticity of uropathogenic Escherichia coli strain 536.</title>
        <authorList>
            <person name="Hochhut B."/>
            <person name="Wilde C."/>
            <person name="Balling G."/>
            <person name="Middendorf B."/>
            <person name="Dobrindt U."/>
            <person name="Brzuszkiewicz E."/>
            <person name="Gottschalk G."/>
            <person name="Carniel E."/>
            <person name="Hacker J."/>
        </authorList>
    </citation>
    <scope>NUCLEOTIDE SEQUENCE [LARGE SCALE GENOMIC DNA]</scope>
    <source>
        <strain>536 / UPEC</strain>
    </source>
</reference>
<organism>
    <name type="scientific">Escherichia coli O6:K15:H31 (strain 536 / UPEC)</name>
    <dbReference type="NCBI Taxonomy" id="362663"/>
    <lineage>
        <taxon>Bacteria</taxon>
        <taxon>Pseudomonadati</taxon>
        <taxon>Pseudomonadota</taxon>
        <taxon>Gammaproteobacteria</taxon>
        <taxon>Enterobacterales</taxon>
        <taxon>Enterobacteriaceae</taxon>
        <taxon>Escherichia</taxon>
    </lineage>
</organism>
<accession>Q0TCE2</accession>
<proteinExistence type="inferred from homology"/>
<gene>
    <name evidence="1" type="primary">rplD</name>
    <name type="ordered locus">ECP_3407</name>
</gene>
<keyword id="KW-0687">Ribonucleoprotein</keyword>
<keyword id="KW-0689">Ribosomal protein</keyword>
<keyword id="KW-0694">RNA-binding</keyword>
<keyword id="KW-0699">rRNA-binding</keyword>
<comment type="function">
    <text evidence="1">One of the primary rRNA binding proteins, this protein initially binds near the 5'-end of the 23S rRNA. It is important during the early stages of 50S assembly. It makes multiple contacts with different domains of the 23S rRNA in the assembled 50S subunit and ribosome.</text>
</comment>
<comment type="function">
    <text evidence="1">Forms part of the polypeptide exit tunnel.</text>
</comment>
<comment type="subunit">
    <text evidence="1">Part of the 50S ribosomal subunit.</text>
</comment>
<comment type="similarity">
    <text evidence="1">Belongs to the universal ribosomal protein uL4 family.</text>
</comment>